<keyword id="KW-0131">Cell cycle</keyword>
<keyword id="KW-0132">Cell division</keyword>
<keyword id="KW-0133">Cell shape</keyword>
<keyword id="KW-0961">Cell wall biogenesis/degradation</keyword>
<keyword id="KW-0963">Cytoplasm</keyword>
<keyword id="KW-0573">Peptidoglycan synthesis</keyword>
<keyword id="KW-0670">Pyruvate</keyword>
<keyword id="KW-1185">Reference proteome</keyword>
<keyword id="KW-0808">Transferase</keyword>
<protein>
    <recommendedName>
        <fullName evidence="1">UDP-N-acetylglucosamine 1-carboxyvinyltransferase</fullName>
        <ecNumber evidence="1">2.5.1.7</ecNumber>
    </recommendedName>
    <alternativeName>
        <fullName evidence="1">Enoylpyruvate transferase</fullName>
    </alternativeName>
    <alternativeName>
        <fullName evidence="1">UDP-N-acetylglucosamine enolpyruvyl transferase</fullName>
        <shortName evidence="1">EPT</shortName>
    </alternativeName>
</protein>
<sequence>MDKIRIIGGGSLNGTIPISGAKNAALPLMIAALLSEEKLVLENVPRLADVALLQRILGNHGVDITVNGKRNGDDPHAGQTMEIDARVIVDTTAPYDLVSRMRASFWVVGPLLARMGEARVSLPGGCAIGTRPVDFHLDALRALGADIDIDAGYVVARAPHGLTGARIVFPKVSVGATHTAIMAAALAKGDTVIENAAREPEIVDLADCLIKMGARIEGAGTSTIEISGVPRLRGARHSVLPDRIETGTYAMATAMTGGDVTLAGARADLLESALDVLRKAGAQIDVNNEGIRVRRNGAGIFPVEVSTAPHPGFPTDLQAQLMALMTRAQGRSRITETIFENRFMHVQELARLGANIHLEGDTAIVEGSDRLKGAPVMATDLRASVSLVIAGLAAEGETMIQRVYHLDRGFERLEEKLSRCGAQIERISG</sequence>
<accession>A8IC24</accession>
<gene>
    <name evidence="1" type="primary">murA</name>
    <name type="ordered locus">AZC_3151</name>
</gene>
<evidence type="ECO:0000255" key="1">
    <source>
        <dbReference type="HAMAP-Rule" id="MF_00111"/>
    </source>
</evidence>
<organism>
    <name type="scientific">Azorhizobium caulinodans (strain ATCC 43989 / DSM 5975 / JCM 20966 / LMG 6465 / NBRC 14845 / NCIMB 13405 / ORS 571)</name>
    <dbReference type="NCBI Taxonomy" id="438753"/>
    <lineage>
        <taxon>Bacteria</taxon>
        <taxon>Pseudomonadati</taxon>
        <taxon>Pseudomonadota</taxon>
        <taxon>Alphaproteobacteria</taxon>
        <taxon>Hyphomicrobiales</taxon>
        <taxon>Xanthobacteraceae</taxon>
        <taxon>Azorhizobium</taxon>
    </lineage>
</organism>
<name>MURA_AZOC5</name>
<feature type="chain" id="PRO_1000071328" description="UDP-N-acetylglucosamine 1-carboxyvinyltransferase">
    <location>
        <begin position="1"/>
        <end position="429"/>
    </location>
</feature>
<feature type="active site" description="Proton donor" evidence="1">
    <location>
        <position position="126"/>
    </location>
</feature>
<feature type="binding site" evidence="1">
    <location>
        <begin position="22"/>
        <end position="23"/>
    </location>
    <ligand>
        <name>phosphoenolpyruvate</name>
        <dbReference type="ChEBI" id="CHEBI:58702"/>
    </ligand>
</feature>
<feature type="binding site" evidence="1">
    <location>
        <position position="102"/>
    </location>
    <ligand>
        <name>UDP-N-acetyl-alpha-D-glucosamine</name>
        <dbReference type="ChEBI" id="CHEBI:57705"/>
    </ligand>
</feature>
<feature type="binding site" evidence="1">
    <location>
        <begin position="171"/>
        <end position="174"/>
    </location>
    <ligand>
        <name>UDP-N-acetyl-alpha-D-glucosamine</name>
        <dbReference type="ChEBI" id="CHEBI:57705"/>
    </ligand>
</feature>
<feature type="binding site" evidence="1">
    <location>
        <position position="316"/>
    </location>
    <ligand>
        <name>UDP-N-acetyl-alpha-D-glucosamine</name>
        <dbReference type="ChEBI" id="CHEBI:57705"/>
    </ligand>
</feature>
<feature type="binding site" evidence="1">
    <location>
        <position position="338"/>
    </location>
    <ligand>
        <name>UDP-N-acetyl-alpha-D-glucosamine</name>
        <dbReference type="ChEBI" id="CHEBI:57705"/>
    </ligand>
</feature>
<feature type="modified residue" description="2-(S-cysteinyl)pyruvic acid O-phosphothioketal" evidence="1">
    <location>
        <position position="126"/>
    </location>
</feature>
<dbReference type="EC" id="2.5.1.7" evidence="1"/>
<dbReference type="EMBL" id="AP009384">
    <property type="protein sequence ID" value="BAF89149.1"/>
    <property type="molecule type" value="Genomic_DNA"/>
</dbReference>
<dbReference type="RefSeq" id="WP_012171675.1">
    <property type="nucleotide sequence ID" value="NC_009937.1"/>
</dbReference>
<dbReference type="SMR" id="A8IC24"/>
<dbReference type="STRING" id="438753.AZC_3151"/>
<dbReference type="KEGG" id="azc:AZC_3151"/>
<dbReference type="eggNOG" id="COG0766">
    <property type="taxonomic scope" value="Bacteria"/>
</dbReference>
<dbReference type="HOGENOM" id="CLU_027387_0_0_5"/>
<dbReference type="UniPathway" id="UPA00219"/>
<dbReference type="Proteomes" id="UP000000270">
    <property type="component" value="Chromosome"/>
</dbReference>
<dbReference type="GO" id="GO:0005737">
    <property type="term" value="C:cytoplasm"/>
    <property type="evidence" value="ECO:0007669"/>
    <property type="project" value="UniProtKB-SubCell"/>
</dbReference>
<dbReference type="GO" id="GO:0008760">
    <property type="term" value="F:UDP-N-acetylglucosamine 1-carboxyvinyltransferase activity"/>
    <property type="evidence" value="ECO:0007669"/>
    <property type="project" value="UniProtKB-UniRule"/>
</dbReference>
<dbReference type="GO" id="GO:0051301">
    <property type="term" value="P:cell division"/>
    <property type="evidence" value="ECO:0007669"/>
    <property type="project" value="UniProtKB-KW"/>
</dbReference>
<dbReference type="GO" id="GO:0071555">
    <property type="term" value="P:cell wall organization"/>
    <property type="evidence" value="ECO:0007669"/>
    <property type="project" value="UniProtKB-KW"/>
</dbReference>
<dbReference type="GO" id="GO:0009252">
    <property type="term" value="P:peptidoglycan biosynthetic process"/>
    <property type="evidence" value="ECO:0007669"/>
    <property type="project" value="UniProtKB-UniRule"/>
</dbReference>
<dbReference type="GO" id="GO:0008360">
    <property type="term" value="P:regulation of cell shape"/>
    <property type="evidence" value="ECO:0007669"/>
    <property type="project" value="UniProtKB-KW"/>
</dbReference>
<dbReference type="GO" id="GO:0019277">
    <property type="term" value="P:UDP-N-acetylgalactosamine biosynthetic process"/>
    <property type="evidence" value="ECO:0007669"/>
    <property type="project" value="InterPro"/>
</dbReference>
<dbReference type="CDD" id="cd01555">
    <property type="entry name" value="UdpNAET"/>
    <property type="match status" value="1"/>
</dbReference>
<dbReference type="FunFam" id="3.65.10.10:FF:000001">
    <property type="entry name" value="UDP-N-acetylglucosamine 1-carboxyvinyltransferase"/>
    <property type="match status" value="1"/>
</dbReference>
<dbReference type="Gene3D" id="3.65.10.10">
    <property type="entry name" value="Enolpyruvate transferase domain"/>
    <property type="match status" value="2"/>
</dbReference>
<dbReference type="HAMAP" id="MF_00111">
    <property type="entry name" value="MurA"/>
    <property type="match status" value="1"/>
</dbReference>
<dbReference type="InterPro" id="IPR001986">
    <property type="entry name" value="Enolpyruvate_Tfrase_dom"/>
</dbReference>
<dbReference type="InterPro" id="IPR036968">
    <property type="entry name" value="Enolpyruvate_Tfrase_sf"/>
</dbReference>
<dbReference type="InterPro" id="IPR050068">
    <property type="entry name" value="MurA_subfamily"/>
</dbReference>
<dbReference type="InterPro" id="IPR013792">
    <property type="entry name" value="RNA3'P_cycl/enolpyr_Trfase_a/b"/>
</dbReference>
<dbReference type="InterPro" id="IPR005750">
    <property type="entry name" value="UDP_GlcNAc_COvinyl_MurA"/>
</dbReference>
<dbReference type="NCBIfam" id="TIGR01072">
    <property type="entry name" value="murA"/>
    <property type="match status" value="1"/>
</dbReference>
<dbReference type="NCBIfam" id="NF006873">
    <property type="entry name" value="PRK09369.1"/>
    <property type="match status" value="1"/>
</dbReference>
<dbReference type="PANTHER" id="PTHR43783">
    <property type="entry name" value="UDP-N-ACETYLGLUCOSAMINE 1-CARBOXYVINYLTRANSFERASE"/>
    <property type="match status" value="1"/>
</dbReference>
<dbReference type="PANTHER" id="PTHR43783:SF1">
    <property type="entry name" value="UDP-N-ACETYLGLUCOSAMINE 1-CARBOXYVINYLTRANSFERASE"/>
    <property type="match status" value="1"/>
</dbReference>
<dbReference type="Pfam" id="PF00275">
    <property type="entry name" value="EPSP_synthase"/>
    <property type="match status" value="1"/>
</dbReference>
<dbReference type="SUPFAM" id="SSF55205">
    <property type="entry name" value="EPT/RTPC-like"/>
    <property type="match status" value="1"/>
</dbReference>
<proteinExistence type="inferred from homology"/>
<comment type="function">
    <text evidence="1">Cell wall formation. Adds enolpyruvyl to UDP-N-acetylglucosamine.</text>
</comment>
<comment type="catalytic activity">
    <reaction evidence="1">
        <text>phosphoenolpyruvate + UDP-N-acetyl-alpha-D-glucosamine = UDP-N-acetyl-3-O-(1-carboxyvinyl)-alpha-D-glucosamine + phosphate</text>
        <dbReference type="Rhea" id="RHEA:18681"/>
        <dbReference type="ChEBI" id="CHEBI:43474"/>
        <dbReference type="ChEBI" id="CHEBI:57705"/>
        <dbReference type="ChEBI" id="CHEBI:58702"/>
        <dbReference type="ChEBI" id="CHEBI:68483"/>
        <dbReference type="EC" id="2.5.1.7"/>
    </reaction>
</comment>
<comment type="pathway">
    <text evidence="1">Cell wall biogenesis; peptidoglycan biosynthesis.</text>
</comment>
<comment type="subcellular location">
    <subcellularLocation>
        <location evidence="1">Cytoplasm</location>
    </subcellularLocation>
</comment>
<comment type="similarity">
    <text evidence="1">Belongs to the EPSP synthase family. MurA subfamily.</text>
</comment>
<reference key="1">
    <citation type="submission" date="2007-04" db="EMBL/GenBank/DDBJ databases">
        <title>Complete genome sequence of the nitrogen-fixing bacterium Azorhizobium caulinodans ORS571.</title>
        <authorList>
            <person name="Lee K.B."/>
            <person name="Backer P.D."/>
            <person name="Aono T."/>
            <person name="Liu C.T."/>
            <person name="Suzuki S."/>
            <person name="Suzuki T."/>
            <person name="Kaneko T."/>
            <person name="Yamada M."/>
            <person name="Tabata S."/>
            <person name="Kupfer D.M."/>
            <person name="Najar F.Z."/>
            <person name="Wiley G.B."/>
            <person name="Roe B."/>
            <person name="Binnewies T."/>
            <person name="Ussery D."/>
            <person name="Vereecke D."/>
            <person name="Gevers D."/>
            <person name="Holsters M."/>
            <person name="Oyaizu H."/>
        </authorList>
    </citation>
    <scope>NUCLEOTIDE SEQUENCE [LARGE SCALE GENOMIC DNA]</scope>
    <source>
        <strain>ATCC 43989 / DSM 5975 / JCM 20966 / LMG 6465 / NBRC 14845 / NCIMB 13405 / ORS 571</strain>
    </source>
</reference>